<sequence length="307" mass="33841">MLVYIAGSGAMGCRFGYQISKTNNDVILLDNWEDHINAIKENGLVVTGDVEETVKLPIMKPTEATQEADLIILFTKAMQLPQMLQDIKGIIGKETKVLCLLNGLGHEDVIRQYIPEHNILMGVTVWTAGLEGPGRAHLQGVGALNLQSMDPNNQDAGHQVADLLNKANLNATYDENVVPNIWRKACVNGTMNSTCALLDCTIGELFASEDGLKMVKEIIHEFVIVGQAEGVELNEEEITQYVMDTSVKAAHHYPSMHQDLVQNHRLTEIDFINGAVNTKGEKLGINTPYCRMITELVHAKEAVLNIQ</sequence>
<feature type="chain" id="PRO_0000157321" description="2-dehydropantoate 2-reductase">
    <location>
        <begin position="1"/>
        <end position="307"/>
    </location>
</feature>
<feature type="active site" description="Proton donor" evidence="1">
    <location>
        <position position="184"/>
    </location>
</feature>
<feature type="binding site" evidence="1">
    <location>
        <begin position="7"/>
        <end position="12"/>
    </location>
    <ligand>
        <name>NADP(+)</name>
        <dbReference type="ChEBI" id="CHEBI:58349"/>
    </ligand>
</feature>
<feature type="binding site" evidence="1">
    <location>
        <position position="102"/>
    </location>
    <ligand>
        <name>NADP(+)</name>
        <dbReference type="ChEBI" id="CHEBI:58349"/>
    </ligand>
</feature>
<feature type="binding site" evidence="1">
    <location>
        <position position="102"/>
    </location>
    <ligand>
        <name>substrate</name>
    </ligand>
</feature>
<feature type="binding site" evidence="1">
    <location>
        <position position="128"/>
    </location>
    <ligand>
        <name>NADP(+)</name>
        <dbReference type="ChEBI" id="CHEBI:58349"/>
    </ligand>
</feature>
<feature type="binding site" evidence="1">
    <location>
        <position position="188"/>
    </location>
    <ligand>
        <name>substrate</name>
    </ligand>
</feature>
<feature type="binding site" evidence="1">
    <location>
        <position position="192"/>
    </location>
    <ligand>
        <name>substrate</name>
    </ligand>
</feature>
<feature type="binding site" evidence="1">
    <location>
        <position position="255"/>
    </location>
    <ligand>
        <name>substrate</name>
    </ligand>
</feature>
<feature type="binding site" evidence="1">
    <location>
        <position position="268"/>
    </location>
    <ligand>
        <name>NADP(+)</name>
        <dbReference type="ChEBI" id="CHEBI:58349"/>
    </ligand>
</feature>
<name>PANE_STRP8</name>
<keyword id="KW-0963">Cytoplasm</keyword>
<keyword id="KW-0521">NADP</keyword>
<keyword id="KW-0560">Oxidoreductase</keyword>
<keyword id="KW-0566">Pantothenate biosynthesis</keyword>
<evidence type="ECO:0000250" key="1">
    <source>
        <dbReference type="UniProtKB" id="P0A9J4"/>
    </source>
</evidence>
<evidence type="ECO:0000305" key="2"/>
<reference key="1">
    <citation type="journal article" date="2002" name="Proc. Natl. Acad. Sci. U.S.A.">
        <title>Genome sequence and comparative microarray analysis of serotype M18 group A Streptococcus strains associated with acute rheumatic fever outbreaks.</title>
        <authorList>
            <person name="Smoot J.C."/>
            <person name="Barbian K.D."/>
            <person name="Van Gompel J.J."/>
            <person name="Smoot L.M."/>
            <person name="Chaussee M.S."/>
            <person name="Sylva G.L."/>
            <person name="Sturdevant D.E."/>
            <person name="Ricklefs S.M."/>
            <person name="Porcella S.F."/>
            <person name="Parkins L.D."/>
            <person name="Beres S.B."/>
            <person name="Campbell D.S."/>
            <person name="Smith T.M."/>
            <person name="Zhang Q."/>
            <person name="Kapur V."/>
            <person name="Daly J.A."/>
            <person name="Veasy L.G."/>
            <person name="Musser J.M."/>
        </authorList>
    </citation>
    <scope>NUCLEOTIDE SEQUENCE [LARGE SCALE GENOMIC DNA]</scope>
    <source>
        <strain>MGAS8232</strain>
    </source>
</reference>
<gene>
    <name type="primary">apbA</name>
    <name type="ordered locus">spyM18_0911</name>
</gene>
<organism>
    <name type="scientific">Streptococcus pyogenes serotype M18 (strain MGAS8232)</name>
    <dbReference type="NCBI Taxonomy" id="186103"/>
    <lineage>
        <taxon>Bacteria</taxon>
        <taxon>Bacillati</taxon>
        <taxon>Bacillota</taxon>
        <taxon>Bacilli</taxon>
        <taxon>Lactobacillales</taxon>
        <taxon>Streptococcaceae</taxon>
        <taxon>Streptococcus</taxon>
    </lineage>
</organism>
<dbReference type="EC" id="1.1.1.169" evidence="1"/>
<dbReference type="EMBL" id="AE009949">
    <property type="protein sequence ID" value="AAL97561.1"/>
    <property type="molecule type" value="Genomic_DNA"/>
</dbReference>
<dbReference type="RefSeq" id="WP_002985045.1">
    <property type="nucleotide sequence ID" value="NC_003485.1"/>
</dbReference>
<dbReference type="SMR" id="Q8P1F1"/>
<dbReference type="KEGG" id="spm:spyM18_0911"/>
<dbReference type="HOGENOM" id="CLU_031468_0_0_9"/>
<dbReference type="UniPathway" id="UPA00028">
    <property type="reaction ID" value="UER00004"/>
</dbReference>
<dbReference type="GO" id="GO:0005737">
    <property type="term" value="C:cytoplasm"/>
    <property type="evidence" value="ECO:0007669"/>
    <property type="project" value="UniProtKB-SubCell"/>
</dbReference>
<dbReference type="GO" id="GO:0008677">
    <property type="term" value="F:2-dehydropantoate 2-reductase activity"/>
    <property type="evidence" value="ECO:0007669"/>
    <property type="project" value="UniProtKB-EC"/>
</dbReference>
<dbReference type="GO" id="GO:0050661">
    <property type="term" value="F:NADP binding"/>
    <property type="evidence" value="ECO:0007669"/>
    <property type="project" value="TreeGrafter"/>
</dbReference>
<dbReference type="GO" id="GO:0015940">
    <property type="term" value="P:pantothenate biosynthetic process"/>
    <property type="evidence" value="ECO:0007669"/>
    <property type="project" value="UniProtKB-UniPathway"/>
</dbReference>
<dbReference type="Gene3D" id="1.10.1040.10">
    <property type="entry name" value="N-(1-d-carboxylethyl)-l-norvaline Dehydrogenase, domain 2"/>
    <property type="match status" value="1"/>
</dbReference>
<dbReference type="Gene3D" id="3.40.50.720">
    <property type="entry name" value="NAD(P)-binding Rossmann-like Domain"/>
    <property type="match status" value="1"/>
</dbReference>
<dbReference type="InterPro" id="IPR008927">
    <property type="entry name" value="6-PGluconate_DH-like_C_sf"/>
</dbReference>
<dbReference type="InterPro" id="IPR013328">
    <property type="entry name" value="6PGD_dom2"/>
</dbReference>
<dbReference type="InterPro" id="IPR003710">
    <property type="entry name" value="ApbA"/>
</dbReference>
<dbReference type="InterPro" id="IPR050838">
    <property type="entry name" value="Ketopantoate_reductase"/>
</dbReference>
<dbReference type="InterPro" id="IPR013752">
    <property type="entry name" value="KPA_reductase"/>
</dbReference>
<dbReference type="InterPro" id="IPR013332">
    <property type="entry name" value="KPR_N"/>
</dbReference>
<dbReference type="InterPro" id="IPR036291">
    <property type="entry name" value="NAD(P)-bd_dom_sf"/>
</dbReference>
<dbReference type="NCBIfam" id="TIGR00745">
    <property type="entry name" value="apbA_panE"/>
    <property type="match status" value="1"/>
</dbReference>
<dbReference type="NCBIfam" id="NF005088">
    <property type="entry name" value="PRK06522.1-2"/>
    <property type="match status" value="1"/>
</dbReference>
<dbReference type="PANTHER" id="PTHR43765:SF2">
    <property type="entry name" value="2-DEHYDROPANTOATE 2-REDUCTASE"/>
    <property type="match status" value="1"/>
</dbReference>
<dbReference type="PANTHER" id="PTHR43765">
    <property type="entry name" value="2-DEHYDROPANTOATE 2-REDUCTASE-RELATED"/>
    <property type="match status" value="1"/>
</dbReference>
<dbReference type="Pfam" id="PF02558">
    <property type="entry name" value="ApbA"/>
    <property type="match status" value="1"/>
</dbReference>
<dbReference type="Pfam" id="PF08546">
    <property type="entry name" value="ApbA_C"/>
    <property type="match status" value="1"/>
</dbReference>
<dbReference type="SUPFAM" id="SSF48179">
    <property type="entry name" value="6-phosphogluconate dehydrogenase C-terminal domain-like"/>
    <property type="match status" value="1"/>
</dbReference>
<dbReference type="SUPFAM" id="SSF51735">
    <property type="entry name" value="NAD(P)-binding Rossmann-fold domains"/>
    <property type="match status" value="1"/>
</dbReference>
<protein>
    <recommendedName>
        <fullName evidence="1">2-dehydropantoate 2-reductase</fullName>
        <ecNumber evidence="1">1.1.1.169</ecNumber>
    </recommendedName>
    <alternativeName>
        <fullName evidence="1">Ketopantoate reductase</fullName>
        <shortName evidence="1">KPR</shortName>
    </alternativeName>
</protein>
<proteinExistence type="inferred from homology"/>
<comment type="function">
    <text evidence="1">Catalyzes the NADPH-dependent reduction of ketopantoate into pantoic acid.</text>
</comment>
<comment type="catalytic activity">
    <reaction evidence="1">
        <text>(R)-pantoate + NADP(+) = 2-dehydropantoate + NADPH + H(+)</text>
        <dbReference type="Rhea" id="RHEA:16233"/>
        <dbReference type="ChEBI" id="CHEBI:11561"/>
        <dbReference type="ChEBI" id="CHEBI:15378"/>
        <dbReference type="ChEBI" id="CHEBI:15980"/>
        <dbReference type="ChEBI" id="CHEBI:57783"/>
        <dbReference type="ChEBI" id="CHEBI:58349"/>
        <dbReference type="EC" id="1.1.1.169"/>
    </reaction>
</comment>
<comment type="pathway">
    <text evidence="1">Cofactor biosynthesis; (R)-pantothenate biosynthesis; (R)-pantoate from 3-methyl-2-oxobutanoate: step 2/2.</text>
</comment>
<comment type="subcellular location">
    <subcellularLocation>
        <location evidence="1">Cytoplasm</location>
    </subcellularLocation>
</comment>
<comment type="similarity">
    <text evidence="2">Belongs to the ketopantoate reductase family.</text>
</comment>
<accession>Q8P1F1</accession>